<sequence>MRLNSVALLSLVATALAAKAPFKIDFEVRRGESKDDLSPEDDSNPRFVKRDGSLDMTLTNKQTFYMATLKIGSNEDENRVLVDTGSSDLWVMSHDLKCVSAPNSKRNERSFGHGTGVKLNERELMQKRKNLYQPSRTIETDEEKEASEKIHNKLFGFGSIYSTVYITEGPGAYSTFSPFVGTEGGSGGSGGSNTCTSYGSFNTENSDTFKKNNTNDFEIQYADDTSAIGIWGYDDVTISNVTVKDLSFAIANETSSDVGVLGIGLPGLEVTTQYGYTYQNLPLKLKADGIIAKSLYSLYLNTADAKAGSILFGAIDHAKYQGDLVTVKMMRTYSQISYPVRIQVPVSKIDVESSSGSTTNILSSTTGVVLDTGSTLSYVFSDTLQSLGKALNGQYSNSVGAYVVNCNLADSSRTVDIEFGGNKTIKVPISDLVLQASKSTCILGVMQQSSSSSYMLFGDNILRSAYIVYDLDDYEVSLAQVSYTNKESIEVIGASGITNSSGSGTTSSSGTSTSTSTRHSAGSIISKPVYGLLLSLLISCYVLV</sequence>
<name>CARP9_CANAL</name>
<dbReference type="EC" id="3.4.23.24" evidence="12 14 15 16"/>
<dbReference type="EMBL" id="CP017625">
    <property type="protein sequence ID" value="AOW28414.1"/>
    <property type="molecule type" value="Genomic_DNA"/>
</dbReference>
<dbReference type="RefSeq" id="XP_712729.2">
    <property type="nucleotide sequence ID" value="XM_707636.2"/>
</dbReference>
<dbReference type="SMR" id="Q59SU1"/>
<dbReference type="FunCoup" id="Q59SU1">
    <property type="interactions" value="353"/>
</dbReference>
<dbReference type="STRING" id="237561.Q59SU1"/>
<dbReference type="MEROPS" id="A01.067"/>
<dbReference type="GlyCosmos" id="Q59SU1">
    <property type="glycosylation" value="5 sites, No reported glycans"/>
</dbReference>
<dbReference type="EnsemblFungi" id="C3_03870C_A-T">
    <property type="protein sequence ID" value="C3_03870C_A-T-p1"/>
    <property type="gene ID" value="C3_03870C_A"/>
</dbReference>
<dbReference type="GeneID" id="3645625"/>
<dbReference type="KEGG" id="cal:CAALFM_C303870CA"/>
<dbReference type="CGD" id="CAL0000194661">
    <property type="gene designation" value="SAP9"/>
</dbReference>
<dbReference type="VEuPathDB" id="FungiDB:C3_03870C_A"/>
<dbReference type="eggNOG" id="KOG1339">
    <property type="taxonomic scope" value="Eukaryota"/>
</dbReference>
<dbReference type="HOGENOM" id="CLU_013253_9_1_1"/>
<dbReference type="InParanoid" id="Q59SU1"/>
<dbReference type="OMA" id="IWGYDDV"/>
<dbReference type="OrthoDB" id="771136at2759"/>
<dbReference type="BRENDA" id="3.4.23.24">
    <property type="organism ID" value="1096"/>
</dbReference>
<dbReference type="PRO" id="PR:Q59SU1"/>
<dbReference type="Proteomes" id="UP000000559">
    <property type="component" value="Chromosome 3"/>
</dbReference>
<dbReference type="GO" id="GO:0009986">
    <property type="term" value="C:cell surface"/>
    <property type="evidence" value="ECO:0000314"/>
    <property type="project" value="CGD"/>
</dbReference>
<dbReference type="GO" id="GO:0005576">
    <property type="term" value="C:extracellular region"/>
    <property type="evidence" value="ECO:0000318"/>
    <property type="project" value="GO_Central"/>
</dbReference>
<dbReference type="GO" id="GO:1903561">
    <property type="term" value="C:extracellular vesicle"/>
    <property type="evidence" value="ECO:0000314"/>
    <property type="project" value="CGD"/>
</dbReference>
<dbReference type="GO" id="GO:0009277">
    <property type="term" value="C:fungal-type cell wall"/>
    <property type="evidence" value="ECO:0000314"/>
    <property type="project" value="CGD"/>
</dbReference>
<dbReference type="GO" id="GO:0016020">
    <property type="term" value="C:membrane"/>
    <property type="evidence" value="ECO:0000314"/>
    <property type="project" value="CGD"/>
</dbReference>
<dbReference type="GO" id="GO:0005886">
    <property type="term" value="C:plasma membrane"/>
    <property type="evidence" value="ECO:0000314"/>
    <property type="project" value="CGD"/>
</dbReference>
<dbReference type="GO" id="GO:0098552">
    <property type="term" value="C:side of membrane"/>
    <property type="evidence" value="ECO:0007669"/>
    <property type="project" value="UniProtKB-KW"/>
</dbReference>
<dbReference type="GO" id="GO:0004190">
    <property type="term" value="F:aspartic-type endopeptidase activity"/>
    <property type="evidence" value="ECO:0000314"/>
    <property type="project" value="CGD"/>
</dbReference>
<dbReference type="GO" id="GO:0044406">
    <property type="term" value="P:adhesion of symbiont to host"/>
    <property type="evidence" value="ECO:0000315"/>
    <property type="project" value="CGD"/>
</dbReference>
<dbReference type="GO" id="GO:0031505">
    <property type="term" value="P:fungal-type cell wall organization"/>
    <property type="evidence" value="ECO:0000315"/>
    <property type="project" value="CGD"/>
</dbReference>
<dbReference type="GO" id="GO:0006508">
    <property type="term" value="P:proteolysis"/>
    <property type="evidence" value="ECO:0000314"/>
    <property type="project" value="CGD"/>
</dbReference>
<dbReference type="GO" id="GO:0052156">
    <property type="term" value="P:symbiont-mediated perturbation of host T-cell mediated immune response"/>
    <property type="evidence" value="ECO:0000315"/>
    <property type="project" value="CGD"/>
</dbReference>
<dbReference type="CDD" id="cd05474">
    <property type="entry name" value="SAP_like"/>
    <property type="match status" value="1"/>
</dbReference>
<dbReference type="FunFam" id="2.40.70.10:FF:000023">
    <property type="entry name" value="Aspartic protease"/>
    <property type="match status" value="1"/>
</dbReference>
<dbReference type="Gene3D" id="2.40.70.10">
    <property type="entry name" value="Acid Proteases"/>
    <property type="match status" value="2"/>
</dbReference>
<dbReference type="InterPro" id="IPR001461">
    <property type="entry name" value="Aspartic_peptidase_A1"/>
</dbReference>
<dbReference type="InterPro" id="IPR001969">
    <property type="entry name" value="Aspartic_peptidase_AS"/>
</dbReference>
<dbReference type="InterPro" id="IPR033121">
    <property type="entry name" value="PEPTIDASE_A1"/>
</dbReference>
<dbReference type="InterPro" id="IPR021109">
    <property type="entry name" value="Peptidase_aspartic_dom_sf"/>
</dbReference>
<dbReference type="InterPro" id="IPR033876">
    <property type="entry name" value="SAP-like"/>
</dbReference>
<dbReference type="PANTHER" id="PTHR47966:SF65">
    <property type="entry name" value="ASPARTIC-TYPE ENDOPEPTIDASE"/>
    <property type="match status" value="1"/>
</dbReference>
<dbReference type="PANTHER" id="PTHR47966">
    <property type="entry name" value="BETA-SITE APP-CLEAVING ENZYME, ISOFORM A-RELATED"/>
    <property type="match status" value="1"/>
</dbReference>
<dbReference type="Pfam" id="PF00026">
    <property type="entry name" value="Asp"/>
    <property type="match status" value="2"/>
</dbReference>
<dbReference type="PRINTS" id="PR00792">
    <property type="entry name" value="PEPSIN"/>
</dbReference>
<dbReference type="SUPFAM" id="SSF50630">
    <property type="entry name" value="Acid proteases"/>
    <property type="match status" value="1"/>
</dbReference>
<dbReference type="PROSITE" id="PS00141">
    <property type="entry name" value="ASP_PROTEASE"/>
    <property type="match status" value="2"/>
</dbReference>
<dbReference type="PROSITE" id="PS51767">
    <property type="entry name" value="PEPTIDASE_A1"/>
    <property type="match status" value="1"/>
</dbReference>
<gene>
    <name evidence="18" type="primary">SAP9</name>
    <name type="synonym">YPS1</name>
    <name type="ordered locus">CAALFM_C303870CA</name>
    <name type="ORF">CaO19.14190</name>
    <name type="ORF">CaO19.6928</name>
</gene>
<feature type="signal peptide" evidence="4">
    <location>
        <begin position="1"/>
        <end position="17"/>
    </location>
</feature>
<feature type="chain" id="PRO_0000424304" description="Secreted aspartic protease 9">
    <location>
        <begin position="18"/>
        <end position="520"/>
    </location>
</feature>
<feature type="propeptide" id="PRO_0000424305" description="Removed in mature form" evidence="4">
    <location>
        <begin position="521"/>
        <end position="544"/>
    </location>
</feature>
<feature type="transmembrane region" description="Helical" evidence="4">
    <location>
        <begin position="524"/>
        <end position="544"/>
    </location>
</feature>
<feature type="domain" description="Peptidase A1" evidence="5">
    <location>
        <begin position="65"/>
        <end position="479"/>
    </location>
</feature>
<feature type="region of interest" description="Disordered" evidence="7">
    <location>
        <begin position="31"/>
        <end position="50"/>
    </location>
</feature>
<feature type="region of interest" description="Disordered" evidence="7">
    <location>
        <begin position="500"/>
        <end position="519"/>
    </location>
</feature>
<feature type="active site" evidence="6">
    <location>
        <position position="83"/>
    </location>
</feature>
<feature type="active site" evidence="6">
    <location>
        <position position="371"/>
    </location>
</feature>
<feature type="binding site" evidence="3">
    <location>
        <begin position="83"/>
        <end position="85"/>
    </location>
    <ligand>
        <name>pepstatin A</name>
        <dbReference type="ChEBI" id="CHEBI:190525"/>
        <note>inhibitor</note>
    </ligand>
</feature>
<feature type="binding site" evidence="3">
    <location>
        <begin position="371"/>
        <end position="375"/>
    </location>
    <ligand>
        <name>pepstatin A</name>
        <dbReference type="ChEBI" id="CHEBI:190525"/>
        <note>inhibitor</note>
    </ligand>
</feature>
<feature type="lipid moiety-binding region" description="GPI-anchor amidated serine" evidence="4">
    <location>
        <position position="520"/>
    </location>
</feature>
<feature type="glycosylation site" description="N-linked (GlcNAc...) asparagine" evidence="4">
    <location>
        <position position="212"/>
    </location>
</feature>
<feature type="glycosylation site" description="N-linked (GlcNAc...) asparagine" evidence="4">
    <location>
        <position position="240"/>
    </location>
</feature>
<feature type="glycosylation site" description="N-linked (GlcNAc...) asparagine" evidence="4">
    <location>
        <position position="252"/>
    </location>
</feature>
<feature type="glycosylation site" description="N-linked (GlcNAc...) asparagine" evidence="4">
    <location>
        <position position="422"/>
    </location>
</feature>
<feature type="glycosylation site" description="N-linked (GlcNAc...) asparagine" evidence="4">
    <location>
        <position position="499"/>
    </location>
</feature>
<feature type="disulfide bond" evidence="2">
    <location>
        <begin position="98"/>
        <end position="195"/>
    </location>
</feature>
<feature type="disulfide bond" evidence="2">
    <location>
        <begin position="406"/>
        <end position="441"/>
    </location>
</feature>
<evidence type="ECO:0000250" key="1">
    <source>
        <dbReference type="UniProtKB" id="P0CS83"/>
    </source>
</evidence>
<evidence type="ECO:0000250" key="2">
    <source>
        <dbReference type="UniProtKB" id="P0CY27"/>
    </source>
</evidence>
<evidence type="ECO:0000250" key="3">
    <source>
        <dbReference type="UniProtKB" id="P0CY29"/>
    </source>
</evidence>
<evidence type="ECO:0000255" key="4"/>
<evidence type="ECO:0000255" key="5">
    <source>
        <dbReference type="PROSITE-ProRule" id="PRU01103"/>
    </source>
</evidence>
<evidence type="ECO:0000255" key="6">
    <source>
        <dbReference type="PROSITE-ProRule" id="PRU10094"/>
    </source>
</evidence>
<evidence type="ECO:0000256" key="7">
    <source>
        <dbReference type="SAM" id="MobiDB-lite"/>
    </source>
</evidence>
<evidence type="ECO:0000269" key="8">
    <source>
    </source>
</evidence>
<evidence type="ECO:0000269" key="9">
    <source>
    </source>
</evidence>
<evidence type="ECO:0000269" key="10">
    <source>
    </source>
</evidence>
<evidence type="ECO:0000269" key="11">
    <source>
    </source>
</evidence>
<evidence type="ECO:0000269" key="12">
    <source>
    </source>
</evidence>
<evidence type="ECO:0000269" key="13">
    <source>
    </source>
</evidence>
<evidence type="ECO:0000269" key="14">
    <source>
    </source>
</evidence>
<evidence type="ECO:0000269" key="15">
    <source>
    </source>
</evidence>
<evidence type="ECO:0000269" key="16">
    <source>
    </source>
</evidence>
<evidence type="ECO:0000269" key="17">
    <source>
    </source>
</evidence>
<evidence type="ECO:0000303" key="18">
    <source>
    </source>
</evidence>
<evidence type="ECO:0000305" key="19"/>
<organism>
    <name type="scientific">Candida albicans (strain SC5314 / ATCC MYA-2876)</name>
    <name type="common">Yeast</name>
    <dbReference type="NCBI Taxonomy" id="237561"/>
    <lineage>
        <taxon>Eukaryota</taxon>
        <taxon>Fungi</taxon>
        <taxon>Dikarya</taxon>
        <taxon>Ascomycota</taxon>
        <taxon>Saccharomycotina</taxon>
        <taxon>Pichiomycetes</taxon>
        <taxon>Debaryomycetaceae</taxon>
        <taxon>Candida/Lodderomyces clade</taxon>
        <taxon>Candida</taxon>
    </lineage>
</organism>
<accession>Q59SU1</accession>
<accession>A0A1D8PJX2</accession>
<proteinExistence type="evidence at protein level"/>
<comment type="function">
    <text evidence="8 9 10 13">Secreted aspartic peptidases (SAPs) are a group of ten acidic hydrolases considered as key virulence factors (PubMed:15820985, PubMed:16269404, PubMed:19805528). These enzymes supply the fungus with nutrient amino acids as well as are able to degrade the selected host's proteins involved in the immune defense (PubMed:15820985, PubMed:16269404, PubMed:19805528). Moreover, acts toward human hemoglobin though limited proteolysis to generate a variety of antimicrobial hemocidins, enabling to compete with the other microorganisms of the same physiological niche using the microbicidal peptides generated from the host protein (PubMed:23927842).</text>
</comment>
<comment type="function">
    <text evidence="14 15 16">Plays a key role in defense against host by cleaving histatin-5 (Hst 5), a peptide from human saliva that carries out fungicidal activity (PubMed:27390786, PubMed:29143452, PubMed:31675138). The cleavage rate decreases in an order of SAP2 &gt; SAP9 &gt; SAP3 &gt; SAP7 &gt; SAP4 &gt; SAP1 &gt; SAP8 (PubMed:27390786). The first cleavage occurs between residues 'Lys-17' and 'His-18' of Hst 5, giving DSHAKRHHGYKRKFHEK and HHSHRGY peptides (PubMed:27390786). Simultaneously, the DSHAKRHHGYKRK peptide is also formed (PubMed:27390786). Further fragmentation by SAP9 results in FHEK product (PubMed:27390786).</text>
</comment>
<comment type="catalytic activity">
    <reaction evidence="12 14 15 16">
        <text>Preferential cleavage at the carboxyl of hydrophobic amino acids, but fails to cleave 15-Leu-|-Tyr-16, 16-Tyr-|-Leu-17 and 24-Phe-|-Phe-25 of insulin B chain. Activates trypsinogen, and degrades keratin.</text>
        <dbReference type="EC" id="3.4.23.24"/>
    </reaction>
</comment>
<comment type="biophysicochemical properties">
    <phDependence>
        <text evidence="12 14 15">Optimum pH is 5.5 using casein-resorufin as substrate, and 6.0-7.0, the pH of the saliva, for cleavage of Hst 5.</text>
    </phDependence>
</comment>
<comment type="subunit">
    <text evidence="1">Monomer.</text>
</comment>
<comment type="subcellular location">
    <subcellularLocation>
        <location evidence="19">Cell membrane</location>
        <topology evidence="19">Lipid-anchor</topology>
        <topology evidence="19">GPI-anchor</topology>
    </subcellularLocation>
    <subcellularLocation>
        <location evidence="9 11">Secreted</location>
        <location evidence="9 11">Cell wall</location>
    </subcellularLocation>
</comment>
<comment type="induction">
    <text evidence="8 11 17">Induced by fluconazole (PubMed:15820985, PubMed:21622905). Expression is regulated by growth phase, temperature, and white-opaque switch (PubMed:9802014).</text>
</comment>
<comment type="PTM">
    <text evidence="9">The GPI-anchor is attached to the protein in the endoplasmic reticulum and serves to target the protein to the cell surface. There, the glucosamine-inositol phospholipid moiety is cleaved off and the GPI-modified mannoprotein is covalently attached via its lipidless GPI glycan remnant to the 1,6-beta-glucan of the outer cell wall layer.</text>
</comment>
<comment type="similarity">
    <text evidence="19">Belongs to the peptidase A1 family.</text>
</comment>
<keyword id="KW-0064">Aspartyl protease</keyword>
<keyword id="KW-1003">Cell membrane</keyword>
<keyword id="KW-0134">Cell wall</keyword>
<keyword id="KW-0165">Cleavage on pair of basic residues</keyword>
<keyword id="KW-1015">Disulfide bond</keyword>
<keyword id="KW-0325">Glycoprotein</keyword>
<keyword id="KW-0336">GPI-anchor</keyword>
<keyword id="KW-0378">Hydrolase</keyword>
<keyword id="KW-0449">Lipoprotein</keyword>
<keyword id="KW-0472">Membrane</keyword>
<keyword id="KW-0645">Protease</keyword>
<keyword id="KW-1185">Reference proteome</keyword>
<keyword id="KW-0677">Repeat</keyword>
<keyword id="KW-0964">Secreted</keyword>
<keyword id="KW-0732">Signal</keyword>
<keyword id="KW-0812">Transmembrane</keyword>
<keyword id="KW-1133">Transmembrane helix</keyword>
<keyword id="KW-0843">Virulence</keyword>
<keyword id="KW-0865">Zymogen</keyword>
<protein>
    <recommendedName>
        <fullName evidence="18">Secreted aspartic protease 9</fullName>
        <shortName evidence="19">ACP 9</shortName>
        <shortName evidence="19">Aspartate protease 9</shortName>
        <ecNumber evidence="12 14 15 16">3.4.23.24</ecNumber>
    </recommendedName>
    <alternativeName>
        <fullName evidence="19">Candidapepsin-9</fullName>
    </alternativeName>
</protein>
<reference key="1">
    <citation type="journal article" date="2004" name="Proc. Natl. Acad. Sci. U.S.A.">
        <title>The diploid genome sequence of Candida albicans.</title>
        <authorList>
            <person name="Jones T."/>
            <person name="Federspiel N.A."/>
            <person name="Chibana H."/>
            <person name="Dungan J."/>
            <person name="Kalman S."/>
            <person name="Magee B.B."/>
            <person name="Newport G."/>
            <person name="Thorstenson Y.R."/>
            <person name="Agabian N."/>
            <person name="Magee P.T."/>
            <person name="Davis R.W."/>
            <person name="Scherer S."/>
        </authorList>
    </citation>
    <scope>NUCLEOTIDE SEQUENCE [LARGE SCALE GENOMIC DNA]</scope>
    <source>
        <strain>SC5314 / ATCC MYA-2876</strain>
    </source>
</reference>
<reference key="2">
    <citation type="journal article" date="2007" name="Genome Biol.">
        <title>Assembly of the Candida albicans genome into sixteen supercontigs aligned on the eight chromosomes.</title>
        <authorList>
            <person name="van het Hoog M."/>
            <person name="Rast T.J."/>
            <person name="Martchenko M."/>
            <person name="Grindle S."/>
            <person name="Dignard D."/>
            <person name="Hogues H."/>
            <person name="Cuomo C."/>
            <person name="Berriman M."/>
            <person name="Scherer S."/>
            <person name="Magee B.B."/>
            <person name="Whiteway M."/>
            <person name="Chibana H."/>
            <person name="Nantel A."/>
            <person name="Magee P.T."/>
        </authorList>
    </citation>
    <scope>GENOME REANNOTATION</scope>
    <source>
        <strain>SC5314 / ATCC MYA-2876</strain>
    </source>
</reference>
<reference key="3">
    <citation type="journal article" date="2013" name="Genome Biol.">
        <title>Assembly of a phased diploid Candida albicans genome facilitates allele-specific measurements and provides a simple model for repeat and indel structure.</title>
        <authorList>
            <person name="Muzzey D."/>
            <person name="Schwartz K."/>
            <person name="Weissman J.S."/>
            <person name="Sherlock G."/>
        </authorList>
    </citation>
    <scope>NUCLEOTIDE SEQUENCE [LARGE SCALE GENOMIC DNA]</scope>
    <scope>GENOME REANNOTATION</scope>
    <source>
        <strain>SC5314 / ATCC MYA-2876</strain>
    </source>
</reference>
<reference key="4">
    <citation type="journal article" date="1998" name="Microbiology">
        <title>Differential regulation of SAP8 and SAP9, which encode two new members of the secreted aspartic proteinase family in Candida albicans.</title>
        <authorList>
            <person name="Monod M."/>
            <person name="Hube B."/>
            <person name="Hess D."/>
            <person name="Sanglard D."/>
        </authorList>
    </citation>
    <scope>INDUCTION</scope>
</reference>
<reference key="5">
    <citation type="journal article" date="2005" name="J. Antimicrob. Chemother.">
        <title>Exposure of Candida albicans to antifungal agents affects expression of SAP2 and SAP9 secreted proteinase genes.</title>
        <authorList>
            <person name="Copping V.M.S."/>
            <person name="Barelle C.J."/>
            <person name="Hube B."/>
            <person name="Gow N.A.R."/>
            <person name="Brown A.J.P."/>
            <person name="Odds F.C."/>
        </authorList>
    </citation>
    <scope>FUNCTION</scope>
    <scope>INDUCTION</scope>
</reference>
<reference key="6">
    <citation type="journal article" date="2006" name="J. Biol. Chem.">
        <title>Glycosylphosphatidylinositol-anchored proteases of Candida albicans target proteins necessary for both cellular processes and host-pathogen interactions.</title>
        <authorList>
            <person name="Albrecht A."/>
            <person name="Felk A."/>
            <person name="Pichova I."/>
            <person name="Naglik J.R."/>
            <person name="Schaller M."/>
            <person name="de Groot P."/>
            <person name="Maccallum D."/>
            <person name="Odds F.C."/>
            <person name="Schafer W."/>
            <person name="Klis F."/>
            <person name="Monod M."/>
            <person name="Hube B."/>
        </authorList>
    </citation>
    <scope>GLYCOSYLATION</scope>
    <scope>SUBCELLULAR LOCATION</scope>
    <scope>FUNCTION</scope>
</reference>
<reference key="7">
    <citation type="journal article" date="2009" name="Infect. Immun.">
        <title>The glycosylphosphatidylinositol-anchored protease Sap9 modulates the interaction of Candida albicans with human neutrophils.</title>
        <authorList>
            <person name="Hornbach A."/>
            <person name="Heyken A."/>
            <person name="Schild L."/>
            <person name="Hube B."/>
            <person name="Loffler J."/>
            <person name="Kurzai O."/>
        </authorList>
    </citation>
    <scope>FUNCTION</scope>
</reference>
<reference key="8">
    <citation type="journal article" date="2011" name="Eukaryot. Cell">
        <title>Effects of fluconazole on the secretome, the wall proteome, and wall integrity of the clinical fungus Candida albicans.</title>
        <authorList>
            <person name="Sorgo A.G."/>
            <person name="Heilmann C.J."/>
            <person name="Dekker H.L."/>
            <person name="Bekker M."/>
            <person name="Brul S."/>
            <person name="de Koster C.G."/>
            <person name="de Koning L.J."/>
            <person name="Klis F.M."/>
        </authorList>
    </citation>
    <scope>SUBCELLULAR LOCATION</scope>
    <scope>INDUCTION</scope>
</reference>
<reference key="9">
    <citation type="journal article" date="2011" name="J. Biochem.">
        <title>Comprehensive characterization of secreted aspartic proteases encoded by a virulence gene family in Candida albicans.</title>
        <authorList>
            <person name="Aoki W."/>
            <person name="Kitahara N."/>
            <person name="Miura N."/>
            <person name="Morisaka H."/>
            <person name="Yamamoto Y."/>
            <person name="Kuroda K."/>
            <person name="Ueda M."/>
        </authorList>
    </citation>
    <scope>CATALYTIC ACTIVITY</scope>
    <scope>BIOPHYSICOCHEMICAL PROPERTIES</scope>
</reference>
<reference key="10">
    <citation type="journal article" date="2013" name="Peptides">
        <title>Secreted aspartic peptidases of Candida albicans liberate bactericidal hemocidins from human hemoglobin.</title>
        <authorList>
            <person name="Bochenska O."/>
            <person name="Rapala-Kozik M."/>
            <person name="Wolak N."/>
            <person name="Bras G."/>
            <person name="Kozik A."/>
            <person name="Dubin A."/>
            <person name="Aoki W."/>
            <person name="Ueda M."/>
            <person name="Mak P."/>
        </authorList>
    </citation>
    <scope>FUNCTION</scope>
</reference>
<reference key="11">
    <citation type="journal article" date="2016" name="Acta Biochim. Pol.">
        <title>The action of ten secreted aspartic proteases of pathogenic yeast Candida albicans on major human salivary antimicrobial peptide, histatin 5.</title>
        <authorList>
            <person name="Bochenska O."/>
            <person name="Rapala-Kozik M."/>
            <person name="Wolak N."/>
            <person name="Aoki W."/>
            <person name="Ueda M."/>
            <person name="Kozik A."/>
        </authorList>
    </citation>
    <scope>FUNCTION</scope>
    <scope>CATALYTIC ACTIVITY</scope>
    <scope>BIOPHYSICOCHEMICAL PROPERTIES</scope>
</reference>
<reference key="12">
    <citation type="journal article" date="2018" name="FEBS J.">
        <title>Engineering improved variants of the antifungal peptide histatin 5 with reduced susceptibility to Candida albicans secreted aspartic proteases and enhanced antimicrobial potency.</title>
        <authorList>
            <person name="Ikonomova S.P."/>
            <person name="Moghaddam-Taaheri P."/>
            <person name="Jabra-Rizk M.A."/>
            <person name="Wang Y."/>
            <person name="Karlsson A.J."/>
        </authorList>
    </citation>
    <scope>FUNCTION</scope>
    <scope>CATALYTIC ACTIVITY</scope>
</reference>
<reference key="13">
    <citation type="journal article" date="2020" name="Protein Sci.">
        <title>Effects of histatin 5 modifications on antifungal activity and kinetics of proteolysis.</title>
        <authorList>
            <person name="Ikonomova S.P."/>
            <person name="Moghaddam-Taaheri P."/>
            <person name="Wang Y."/>
            <person name="Doolin M.T."/>
            <person name="Stroka K.M."/>
            <person name="Hube B."/>
            <person name="Karlsson A.J."/>
        </authorList>
    </citation>
    <scope>FUNCTION</scope>
    <scope>CATALYTIC ACTIVITY</scope>
</reference>